<protein>
    <recommendedName>
        <fullName evidence="1">Octanoyltransferase</fullName>
        <ecNumber evidence="1">2.3.1.181</ecNumber>
    </recommendedName>
    <alternativeName>
        <fullName evidence="1">Lipoate-protein ligase B</fullName>
    </alternativeName>
    <alternativeName>
        <fullName evidence="1">Lipoyl/octanoyl transferase</fullName>
    </alternativeName>
    <alternativeName>
        <fullName evidence="1">Octanoyl-[acyl-carrier-protein]-protein N-octanoyltransferase</fullName>
    </alternativeName>
</protein>
<sequence>MKKLLVIDFKEKIKYEDAWNFQRKLHDLRVNNIIYDTLILLEHFPVITLGKFGNESNLLKRKEELEDIGIDFLRVDRGGDITYHGPLQLVGYLIFRVEGVKNFVLKIERSIINVLNEYGIEAKENLKYPGVWVGDRKIAAIGIAIKKKVSYHGFALNVSNDLTPFSYIIPCGLKDKKVTSILKEADFSPSMEDVKKKVCLSVVREFGFDSFKVFNFSSYKELSNFDMLLEDQ</sequence>
<name>LIPB_DICTD</name>
<organism>
    <name type="scientific">Dictyoglomus turgidum (strain DSM 6724 / Z-1310)</name>
    <dbReference type="NCBI Taxonomy" id="515635"/>
    <lineage>
        <taxon>Bacteria</taxon>
        <taxon>Pseudomonadati</taxon>
        <taxon>Dictyoglomota</taxon>
        <taxon>Dictyoglomia</taxon>
        <taxon>Dictyoglomales</taxon>
        <taxon>Dictyoglomaceae</taxon>
        <taxon>Dictyoglomus</taxon>
    </lineage>
</organism>
<proteinExistence type="inferred from homology"/>
<gene>
    <name evidence="1" type="primary">lipB</name>
    <name type="ordered locus">Dtur_0763</name>
</gene>
<dbReference type="EC" id="2.3.1.181" evidence="1"/>
<dbReference type="EMBL" id="CP001251">
    <property type="protein sequence ID" value="ACK42045.1"/>
    <property type="molecule type" value="Genomic_DNA"/>
</dbReference>
<dbReference type="RefSeq" id="WP_012583130.1">
    <property type="nucleotide sequence ID" value="NC_011661.1"/>
</dbReference>
<dbReference type="RefSeq" id="YP_002352659.1">
    <property type="nucleotide sequence ID" value="NC_011661.1"/>
</dbReference>
<dbReference type="SMR" id="B8DZW2"/>
<dbReference type="STRING" id="515635.Dtur_0763"/>
<dbReference type="EnsemblBacteria" id="ACK42045">
    <property type="protein sequence ID" value="ACK42045"/>
    <property type="gene ID" value="Dtur_0763"/>
</dbReference>
<dbReference type="KEGG" id="dtu:Dtur_0763"/>
<dbReference type="PATRIC" id="fig|515635.4.peg.801"/>
<dbReference type="eggNOG" id="COG0321">
    <property type="taxonomic scope" value="Bacteria"/>
</dbReference>
<dbReference type="HOGENOM" id="CLU_035168_1_0_0"/>
<dbReference type="InParanoid" id="B8DZW2"/>
<dbReference type="OrthoDB" id="9787061at2"/>
<dbReference type="UniPathway" id="UPA00538">
    <property type="reaction ID" value="UER00592"/>
</dbReference>
<dbReference type="Proteomes" id="UP000007719">
    <property type="component" value="Chromosome"/>
</dbReference>
<dbReference type="GO" id="GO:0005737">
    <property type="term" value="C:cytoplasm"/>
    <property type="evidence" value="ECO:0007669"/>
    <property type="project" value="UniProtKB-SubCell"/>
</dbReference>
<dbReference type="GO" id="GO:0033819">
    <property type="term" value="F:lipoyl(octanoyl) transferase activity"/>
    <property type="evidence" value="ECO:0000318"/>
    <property type="project" value="GO_Central"/>
</dbReference>
<dbReference type="GO" id="GO:0036211">
    <property type="term" value="P:protein modification process"/>
    <property type="evidence" value="ECO:0007669"/>
    <property type="project" value="InterPro"/>
</dbReference>
<dbReference type="CDD" id="cd16444">
    <property type="entry name" value="LipB"/>
    <property type="match status" value="1"/>
</dbReference>
<dbReference type="FunFam" id="3.30.930.10:FF:000189">
    <property type="entry name" value="Octanoyltransferase"/>
    <property type="match status" value="1"/>
</dbReference>
<dbReference type="Gene3D" id="3.30.930.10">
    <property type="entry name" value="Bira Bifunctional Protein, Domain 2"/>
    <property type="match status" value="1"/>
</dbReference>
<dbReference type="HAMAP" id="MF_00013">
    <property type="entry name" value="LipB"/>
    <property type="match status" value="1"/>
</dbReference>
<dbReference type="InterPro" id="IPR045864">
    <property type="entry name" value="aa-tRNA-synth_II/BPL/LPL"/>
</dbReference>
<dbReference type="InterPro" id="IPR004143">
    <property type="entry name" value="BPL_LPL_catalytic"/>
</dbReference>
<dbReference type="InterPro" id="IPR000544">
    <property type="entry name" value="Octanoyltransferase"/>
</dbReference>
<dbReference type="NCBIfam" id="TIGR00214">
    <property type="entry name" value="lipB"/>
    <property type="match status" value="1"/>
</dbReference>
<dbReference type="NCBIfam" id="NF010925">
    <property type="entry name" value="PRK14345.1"/>
    <property type="match status" value="1"/>
</dbReference>
<dbReference type="PANTHER" id="PTHR10993:SF7">
    <property type="entry name" value="LIPOYLTRANSFERASE 2, MITOCHONDRIAL-RELATED"/>
    <property type="match status" value="1"/>
</dbReference>
<dbReference type="PANTHER" id="PTHR10993">
    <property type="entry name" value="OCTANOYLTRANSFERASE"/>
    <property type="match status" value="1"/>
</dbReference>
<dbReference type="Pfam" id="PF21948">
    <property type="entry name" value="LplA-B_cat"/>
    <property type="match status" value="1"/>
</dbReference>
<dbReference type="PIRSF" id="PIRSF016262">
    <property type="entry name" value="LPLase"/>
    <property type="match status" value="1"/>
</dbReference>
<dbReference type="SUPFAM" id="SSF55681">
    <property type="entry name" value="Class II aaRS and biotin synthetases"/>
    <property type="match status" value="1"/>
</dbReference>
<dbReference type="PROSITE" id="PS51733">
    <property type="entry name" value="BPL_LPL_CATALYTIC"/>
    <property type="match status" value="1"/>
</dbReference>
<evidence type="ECO:0000255" key="1">
    <source>
        <dbReference type="HAMAP-Rule" id="MF_00013"/>
    </source>
</evidence>
<evidence type="ECO:0000255" key="2">
    <source>
        <dbReference type="PROSITE-ProRule" id="PRU01067"/>
    </source>
</evidence>
<reference key="1">
    <citation type="journal article" date="2016" name="Front. Microbiol.">
        <title>The complete genome sequence of hyperthermophile Dictyoglomus turgidum DSM 6724 reveals a specialized carbohydrate fermentor.</title>
        <authorList>
            <person name="Brumm P.J."/>
            <person name="Gowda K."/>
            <person name="Robb F.T."/>
            <person name="Mead D.A."/>
        </authorList>
    </citation>
    <scope>NUCLEOTIDE SEQUENCE [LARGE SCALE GENOMIC DNA]</scope>
    <source>
        <strain>DSM 6724 / Z-1310</strain>
    </source>
</reference>
<keyword id="KW-0012">Acyltransferase</keyword>
<keyword id="KW-0963">Cytoplasm</keyword>
<keyword id="KW-1185">Reference proteome</keyword>
<keyword id="KW-0808">Transferase</keyword>
<comment type="function">
    <text evidence="1">Catalyzes the transfer of endogenously produced octanoic acid from octanoyl-acyl-carrier-protein onto the lipoyl domains of lipoate-dependent enzymes. Lipoyl-ACP can also act as a substrate although octanoyl-ACP is likely to be the physiological substrate.</text>
</comment>
<comment type="catalytic activity">
    <reaction evidence="1">
        <text>octanoyl-[ACP] + L-lysyl-[protein] = N(6)-octanoyl-L-lysyl-[protein] + holo-[ACP] + H(+)</text>
        <dbReference type="Rhea" id="RHEA:17665"/>
        <dbReference type="Rhea" id="RHEA-COMP:9636"/>
        <dbReference type="Rhea" id="RHEA-COMP:9685"/>
        <dbReference type="Rhea" id="RHEA-COMP:9752"/>
        <dbReference type="Rhea" id="RHEA-COMP:9928"/>
        <dbReference type="ChEBI" id="CHEBI:15378"/>
        <dbReference type="ChEBI" id="CHEBI:29969"/>
        <dbReference type="ChEBI" id="CHEBI:64479"/>
        <dbReference type="ChEBI" id="CHEBI:78463"/>
        <dbReference type="ChEBI" id="CHEBI:78809"/>
        <dbReference type="EC" id="2.3.1.181"/>
    </reaction>
</comment>
<comment type="pathway">
    <text evidence="1">Protein modification; protein lipoylation via endogenous pathway; protein N(6)-(lipoyl)lysine from octanoyl-[acyl-carrier-protein]: step 1/2.</text>
</comment>
<comment type="subcellular location">
    <subcellularLocation>
        <location evidence="1">Cytoplasm</location>
    </subcellularLocation>
</comment>
<comment type="miscellaneous">
    <text evidence="1">In the reaction, the free carboxyl group of octanoic acid is attached via an amide linkage to the epsilon-amino group of a specific lysine residue of lipoyl domains of lipoate-dependent enzymes.</text>
</comment>
<comment type="similarity">
    <text evidence="1">Belongs to the LipB family.</text>
</comment>
<accession>B8DZW2</accession>
<feature type="chain" id="PRO_1000201794" description="Octanoyltransferase">
    <location>
        <begin position="1"/>
        <end position="232"/>
    </location>
</feature>
<feature type="domain" description="BPL/LPL catalytic" evidence="2">
    <location>
        <begin position="32"/>
        <end position="219"/>
    </location>
</feature>
<feature type="active site" description="Acyl-thioester intermediate" evidence="1">
    <location>
        <position position="171"/>
    </location>
</feature>
<feature type="binding site" evidence="1">
    <location>
        <begin position="77"/>
        <end position="84"/>
    </location>
    <ligand>
        <name>substrate</name>
    </ligand>
</feature>
<feature type="binding site" evidence="1">
    <location>
        <begin position="140"/>
        <end position="142"/>
    </location>
    <ligand>
        <name>substrate</name>
    </ligand>
</feature>
<feature type="binding site" evidence="1">
    <location>
        <begin position="153"/>
        <end position="155"/>
    </location>
    <ligand>
        <name>substrate</name>
    </ligand>
</feature>
<feature type="site" description="Lowers pKa of active site Cys" evidence="1">
    <location>
        <position position="137"/>
    </location>
</feature>